<evidence type="ECO:0000250" key="1"/>
<evidence type="ECO:0000255" key="2">
    <source>
        <dbReference type="HAMAP-Rule" id="MF_00600"/>
    </source>
</evidence>
<accession>Q3KMQ9</accession>
<accession>O84112</accession>
<accession>P17203</accession>
<feature type="initiator methionine" description="Removed" evidence="1">
    <location>
        <position position="1"/>
    </location>
</feature>
<feature type="chain" id="PRO_0000063333" description="Chaperonin GroEL">
    <location>
        <begin position="2"/>
        <end position="544"/>
    </location>
</feature>
<feature type="binding site" evidence="2">
    <location>
        <begin position="30"/>
        <end position="33"/>
    </location>
    <ligand>
        <name>ATP</name>
        <dbReference type="ChEBI" id="CHEBI:30616"/>
    </ligand>
</feature>
<feature type="binding site" evidence="2">
    <location>
        <position position="51"/>
    </location>
    <ligand>
        <name>ATP</name>
        <dbReference type="ChEBI" id="CHEBI:30616"/>
    </ligand>
</feature>
<feature type="binding site" evidence="2">
    <location>
        <begin position="87"/>
        <end position="91"/>
    </location>
    <ligand>
        <name>ATP</name>
        <dbReference type="ChEBI" id="CHEBI:30616"/>
    </ligand>
</feature>
<feature type="binding site" evidence="2">
    <location>
        <position position="415"/>
    </location>
    <ligand>
        <name>ATP</name>
        <dbReference type="ChEBI" id="CHEBI:30616"/>
    </ligand>
</feature>
<feature type="binding site" evidence="2">
    <location>
        <begin position="481"/>
        <end position="483"/>
    </location>
    <ligand>
        <name>ATP</name>
        <dbReference type="ChEBI" id="CHEBI:30616"/>
    </ligand>
</feature>
<feature type="binding site" evidence="2">
    <location>
        <position position="497"/>
    </location>
    <ligand>
        <name>ATP</name>
        <dbReference type="ChEBI" id="CHEBI:30616"/>
    </ligand>
</feature>
<proteinExistence type="evidence at transcript level"/>
<protein>
    <recommendedName>
        <fullName evidence="2">Chaperonin GroEL</fullName>
        <ecNumber evidence="2">5.6.1.7</ecNumber>
    </recommendedName>
    <alternativeName>
        <fullName evidence="2">60 kDa chaperonin</fullName>
    </alternativeName>
    <alternativeName>
        <fullName evidence="2">Chaperonin-60</fullName>
        <shortName evidence="2">Cpn60</shortName>
    </alternativeName>
</protein>
<name>CH60_CHLTA</name>
<reference key="1">
    <citation type="journal article" date="1990" name="Infect. Immun.">
        <title>The Chlamydia trachomatis hyp operon is homologous to the groE stress response operon of Escherichia coli.</title>
        <authorList>
            <person name="Morrison R.P."/>
            <person name="Su H."/>
            <person name="Lyng K."/>
            <person name="Yuan Y."/>
        </authorList>
    </citation>
    <scope>NUCLEOTIDE SEQUENCE [GENOMIC DNA]</scope>
</reference>
<reference key="2">
    <citation type="journal article" date="2005" name="Infect. Immun.">
        <title>Comparative genomic analysis of Chlamydia trachomatis oculotropic and genitotropic strains.</title>
        <authorList>
            <person name="Carlson J.H."/>
            <person name="Porcella S.F."/>
            <person name="McClarty G."/>
            <person name="Caldwell H.D."/>
        </authorList>
    </citation>
    <scope>NUCLEOTIDE SEQUENCE [LARGE SCALE GENOMIC DNA]</scope>
    <source>
        <strain>ATCC VR-571B / DSM 19440 / HAR-13</strain>
    </source>
</reference>
<sequence>MVAKNIKYNEEARKKIQKGVKTLAEAVKVTLGPKGRHVVIDKSFGSPQVTKDGVTVAKEVELADKHENMGAQMVKEVASKTADKAGDGTTTATVLAEAIYTEGLRNVTAGANPMDLKRGIDKAVKVVVDQIKKISKPVQHHKEIAQVATISANNDAEIGNLIAEAMEKVGKNGSITVEEAKGFETVLDVVEGMNFNRGYLSSYFATNPETQECVLEDALVLIYDKKISGIKDFLPILQQVAESGRPLLIIAEDIEGEALATLVVNRIRGGFRVCAVKAPGFGDRRKAMLEDIAILTGGQLISEELGMKLENANLAMLGKAKKVIVSKEDTTIVEGMGEKEALEARCESIKKQIEDSSSDYDKEKLQERLAKLSGGVAVIRVGAATEIEMKEKKDRVDDAQHATIAAVEEGILPGGGTALIRCIPTLEAFLPMLTNEDEQIGARIVLKALSAPLKQIAANAGKEGAIIFQQVMSRSANEGYDALRDAYTDMLEAGILDPAKVTRSALESAASVAGLLLTTEALIAEIPEEKPAAAPAMPGAGMDY</sequence>
<comment type="function">
    <text evidence="2">Together with its co-chaperonin GroES, plays an essential role in assisting protein folding. The GroEL-GroES system forms a nano-cage that allows encapsulation of the non-native substrate proteins and provides a physical environment optimized to promote and accelerate protein folding.</text>
</comment>
<comment type="catalytic activity">
    <reaction evidence="2">
        <text>ATP + H2O + a folded polypeptide = ADP + phosphate + an unfolded polypeptide.</text>
        <dbReference type="EC" id="5.6.1.7"/>
    </reaction>
</comment>
<comment type="subunit">
    <text evidence="2">Forms a cylinder of 14 subunits composed of two heptameric rings stacked back-to-back. Interacts with the co-chaperonin GroES.</text>
</comment>
<comment type="subcellular location">
    <subcellularLocation>
        <location evidence="2">Cytoplasm</location>
    </subcellularLocation>
</comment>
<comment type="induction">
    <text>By stress.</text>
</comment>
<comment type="similarity">
    <text evidence="2">Belongs to the chaperonin (HSP60) family.</text>
</comment>
<gene>
    <name evidence="2" type="primary">groEL</name>
    <name evidence="2" type="synonym">groL</name>
    <name type="synonym">hypB</name>
    <name type="ordered locus">CTA_0117</name>
</gene>
<organism>
    <name type="scientific">Chlamydia trachomatis serovar A (strain ATCC VR-571B / DSM 19440 / HAR-13)</name>
    <dbReference type="NCBI Taxonomy" id="315277"/>
    <lineage>
        <taxon>Bacteria</taxon>
        <taxon>Pseudomonadati</taxon>
        <taxon>Chlamydiota</taxon>
        <taxon>Chlamydiia</taxon>
        <taxon>Chlamydiales</taxon>
        <taxon>Chlamydiaceae</taxon>
        <taxon>Chlamydia/Chlamydophila group</taxon>
        <taxon>Chlamydia</taxon>
    </lineage>
</organism>
<keyword id="KW-0067">ATP-binding</keyword>
<keyword id="KW-0143">Chaperone</keyword>
<keyword id="KW-0963">Cytoplasm</keyword>
<keyword id="KW-0413">Isomerase</keyword>
<keyword id="KW-0547">Nucleotide-binding</keyword>
<keyword id="KW-0346">Stress response</keyword>
<dbReference type="EC" id="5.6.1.7" evidence="2"/>
<dbReference type="EMBL" id="M31739">
    <property type="protein sequence ID" value="AAA03204.1"/>
    <property type="molecule type" value="Unassigned_DNA"/>
</dbReference>
<dbReference type="EMBL" id="CP000051">
    <property type="protein sequence ID" value="AAX50363.1"/>
    <property type="molecule type" value="Genomic_DNA"/>
</dbReference>
<dbReference type="PIR" id="B41479">
    <property type="entry name" value="B41479"/>
</dbReference>
<dbReference type="RefSeq" id="WP_011324573.1">
    <property type="nucleotide sequence ID" value="NC_007429.1"/>
</dbReference>
<dbReference type="SMR" id="Q3KMQ9"/>
<dbReference type="KEGG" id="cta:CTA_0117"/>
<dbReference type="HOGENOM" id="CLU_016503_3_0_0"/>
<dbReference type="Proteomes" id="UP000002532">
    <property type="component" value="Chromosome"/>
</dbReference>
<dbReference type="GO" id="GO:0005737">
    <property type="term" value="C:cytoplasm"/>
    <property type="evidence" value="ECO:0007669"/>
    <property type="project" value="UniProtKB-SubCell"/>
</dbReference>
<dbReference type="GO" id="GO:0005524">
    <property type="term" value="F:ATP binding"/>
    <property type="evidence" value="ECO:0007669"/>
    <property type="project" value="UniProtKB-UniRule"/>
</dbReference>
<dbReference type="GO" id="GO:0140662">
    <property type="term" value="F:ATP-dependent protein folding chaperone"/>
    <property type="evidence" value="ECO:0007669"/>
    <property type="project" value="InterPro"/>
</dbReference>
<dbReference type="GO" id="GO:0016853">
    <property type="term" value="F:isomerase activity"/>
    <property type="evidence" value="ECO:0007669"/>
    <property type="project" value="UniProtKB-KW"/>
</dbReference>
<dbReference type="GO" id="GO:0051082">
    <property type="term" value="F:unfolded protein binding"/>
    <property type="evidence" value="ECO:0007669"/>
    <property type="project" value="UniProtKB-UniRule"/>
</dbReference>
<dbReference type="GO" id="GO:0042026">
    <property type="term" value="P:protein refolding"/>
    <property type="evidence" value="ECO:0007669"/>
    <property type="project" value="UniProtKB-UniRule"/>
</dbReference>
<dbReference type="CDD" id="cd03344">
    <property type="entry name" value="GroEL"/>
    <property type="match status" value="1"/>
</dbReference>
<dbReference type="FunFam" id="1.10.560.10:FF:000001">
    <property type="entry name" value="60 kDa chaperonin"/>
    <property type="match status" value="1"/>
</dbReference>
<dbReference type="FunFam" id="3.50.7.10:FF:000001">
    <property type="entry name" value="60 kDa chaperonin"/>
    <property type="match status" value="1"/>
</dbReference>
<dbReference type="Gene3D" id="3.50.7.10">
    <property type="entry name" value="GroEL"/>
    <property type="match status" value="1"/>
</dbReference>
<dbReference type="Gene3D" id="1.10.560.10">
    <property type="entry name" value="GroEL-like equatorial domain"/>
    <property type="match status" value="1"/>
</dbReference>
<dbReference type="Gene3D" id="3.30.260.10">
    <property type="entry name" value="TCP-1-like chaperonin intermediate domain"/>
    <property type="match status" value="1"/>
</dbReference>
<dbReference type="HAMAP" id="MF_00600">
    <property type="entry name" value="CH60"/>
    <property type="match status" value="1"/>
</dbReference>
<dbReference type="InterPro" id="IPR018370">
    <property type="entry name" value="Chaperonin_Cpn60_CS"/>
</dbReference>
<dbReference type="InterPro" id="IPR001844">
    <property type="entry name" value="Cpn60/GroEL"/>
</dbReference>
<dbReference type="InterPro" id="IPR002423">
    <property type="entry name" value="Cpn60/GroEL/TCP-1"/>
</dbReference>
<dbReference type="InterPro" id="IPR027409">
    <property type="entry name" value="GroEL-like_apical_dom_sf"/>
</dbReference>
<dbReference type="InterPro" id="IPR027413">
    <property type="entry name" value="GROEL-like_equatorial_sf"/>
</dbReference>
<dbReference type="InterPro" id="IPR027410">
    <property type="entry name" value="TCP-1-like_intermed_sf"/>
</dbReference>
<dbReference type="NCBIfam" id="TIGR02348">
    <property type="entry name" value="GroEL"/>
    <property type="match status" value="1"/>
</dbReference>
<dbReference type="NCBIfam" id="NF000592">
    <property type="entry name" value="PRK00013.1"/>
    <property type="match status" value="1"/>
</dbReference>
<dbReference type="NCBIfam" id="NF009487">
    <property type="entry name" value="PRK12849.1"/>
    <property type="match status" value="1"/>
</dbReference>
<dbReference type="NCBIfam" id="NF009488">
    <property type="entry name" value="PRK12850.1"/>
    <property type="match status" value="1"/>
</dbReference>
<dbReference type="NCBIfam" id="NF009489">
    <property type="entry name" value="PRK12851.1"/>
    <property type="match status" value="1"/>
</dbReference>
<dbReference type="PANTHER" id="PTHR45633">
    <property type="entry name" value="60 KDA HEAT SHOCK PROTEIN, MITOCHONDRIAL"/>
    <property type="match status" value="1"/>
</dbReference>
<dbReference type="Pfam" id="PF00118">
    <property type="entry name" value="Cpn60_TCP1"/>
    <property type="match status" value="1"/>
</dbReference>
<dbReference type="PRINTS" id="PR00298">
    <property type="entry name" value="CHAPERONIN60"/>
</dbReference>
<dbReference type="SUPFAM" id="SSF52029">
    <property type="entry name" value="GroEL apical domain-like"/>
    <property type="match status" value="1"/>
</dbReference>
<dbReference type="SUPFAM" id="SSF48592">
    <property type="entry name" value="GroEL equatorial domain-like"/>
    <property type="match status" value="1"/>
</dbReference>
<dbReference type="SUPFAM" id="SSF54849">
    <property type="entry name" value="GroEL-intermediate domain like"/>
    <property type="match status" value="1"/>
</dbReference>
<dbReference type="PROSITE" id="PS00296">
    <property type="entry name" value="CHAPERONINS_CPN60"/>
    <property type="match status" value="1"/>
</dbReference>